<name>LSPA_SALA4</name>
<proteinExistence type="inferred from homology"/>
<feature type="chain" id="PRO_1000097273" description="Lipoprotein signal peptidase">
    <location>
        <begin position="1"/>
        <end position="166"/>
    </location>
</feature>
<feature type="transmembrane region" description="Helical" evidence="1">
    <location>
        <begin position="12"/>
        <end position="32"/>
    </location>
</feature>
<feature type="transmembrane region" description="Helical" evidence="1">
    <location>
        <begin position="70"/>
        <end position="90"/>
    </location>
</feature>
<feature type="transmembrane region" description="Helical" evidence="1">
    <location>
        <begin position="102"/>
        <end position="122"/>
    </location>
</feature>
<feature type="transmembrane region" description="Helical" evidence="1">
    <location>
        <begin position="137"/>
        <end position="157"/>
    </location>
</feature>
<feature type="active site" evidence="1">
    <location>
        <position position="123"/>
    </location>
</feature>
<feature type="active site" evidence="1">
    <location>
        <position position="141"/>
    </location>
</feature>
<reference key="1">
    <citation type="journal article" date="2011" name="J. Bacteriol.">
        <title>Comparative genomics of 28 Salmonella enterica isolates: evidence for CRISPR-mediated adaptive sublineage evolution.</title>
        <authorList>
            <person name="Fricke W.F."/>
            <person name="Mammel M.K."/>
            <person name="McDermott P.F."/>
            <person name="Tartera C."/>
            <person name="White D.G."/>
            <person name="Leclerc J.E."/>
            <person name="Ravel J."/>
            <person name="Cebula T.A."/>
        </authorList>
    </citation>
    <scope>NUCLEOTIDE SEQUENCE [LARGE SCALE GENOMIC DNA]</scope>
    <source>
        <strain>SL483</strain>
    </source>
</reference>
<protein>
    <recommendedName>
        <fullName evidence="1">Lipoprotein signal peptidase</fullName>
        <ecNumber evidence="1">3.4.23.36</ecNumber>
    </recommendedName>
    <alternativeName>
        <fullName evidence="1">Prolipoprotein signal peptidase</fullName>
    </alternativeName>
    <alternativeName>
        <fullName evidence="1">Signal peptidase II</fullName>
        <shortName evidence="1">SPase II</shortName>
    </alternativeName>
</protein>
<dbReference type="EC" id="3.4.23.36" evidence="1"/>
<dbReference type="EMBL" id="CP001138">
    <property type="protein sequence ID" value="ACH49067.1"/>
    <property type="molecule type" value="Genomic_DNA"/>
</dbReference>
<dbReference type="RefSeq" id="WP_000042736.1">
    <property type="nucleotide sequence ID" value="NC_011149.1"/>
</dbReference>
<dbReference type="SMR" id="B5F725"/>
<dbReference type="MEROPS" id="A08.001"/>
<dbReference type="KEGG" id="sea:SeAg_B0052"/>
<dbReference type="HOGENOM" id="CLU_083252_4_0_6"/>
<dbReference type="UniPathway" id="UPA00665"/>
<dbReference type="Proteomes" id="UP000008819">
    <property type="component" value="Chromosome"/>
</dbReference>
<dbReference type="GO" id="GO:0005886">
    <property type="term" value="C:plasma membrane"/>
    <property type="evidence" value="ECO:0007669"/>
    <property type="project" value="UniProtKB-SubCell"/>
</dbReference>
<dbReference type="GO" id="GO:0004190">
    <property type="term" value="F:aspartic-type endopeptidase activity"/>
    <property type="evidence" value="ECO:0007669"/>
    <property type="project" value="UniProtKB-UniRule"/>
</dbReference>
<dbReference type="GO" id="GO:0006508">
    <property type="term" value="P:proteolysis"/>
    <property type="evidence" value="ECO:0007669"/>
    <property type="project" value="UniProtKB-KW"/>
</dbReference>
<dbReference type="HAMAP" id="MF_00161">
    <property type="entry name" value="LspA"/>
    <property type="match status" value="1"/>
</dbReference>
<dbReference type="InterPro" id="IPR001872">
    <property type="entry name" value="Peptidase_A8"/>
</dbReference>
<dbReference type="NCBIfam" id="TIGR00077">
    <property type="entry name" value="lspA"/>
    <property type="match status" value="1"/>
</dbReference>
<dbReference type="PANTHER" id="PTHR33695">
    <property type="entry name" value="LIPOPROTEIN SIGNAL PEPTIDASE"/>
    <property type="match status" value="1"/>
</dbReference>
<dbReference type="PANTHER" id="PTHR33695:SF1">
    <property type="entry name" value="LIPOPROTEIN SIGNAL PEPTIDASE"/>
    <property type="match status" value="1"/>
</dbReference>
<dbReference type="Pfam" id="PF01252">
    <property type="entry name" value="Peptidase_A8"/>
    <property type="match status" value="1"/>
</dbReference>
<dbReference type="PRINTS" id="PR00781">
    <property type="entry name" value="LIPOSIGPTASE"/>
</dbReference>
<dbReference type="PROSITE" id="PS00855">
    <property type="entry name" value="SPASE_II"/>
    <property type="match status" value="1"/>
</dbReference>
<accession>B5F725</accession>
<gene>
    <name evidence="1" type="primary">lspA</name>
    <name type="ordered locus">SeAg_B0052</name>
</gene>
<organism>
    <name type="scientific">Salmonella agona (strain SL483)</name>
    <dbReference type="NCBI Taxonomy" id="454166"/>
    <lineage>
        <taxon>Bacteria</taxon>
        <taxon>Pseudomonadati</taxon>
        <taxon>Pseudomonadota</taxon>
        <taxon>Gammaproteobacteria</taxon>
        <taxon>Enterobacterales</taxon>
        <taxon>Enterobacteriaceae</taxon>
        <taxon>Salmonella</taxon>
    </lineage>
</organism>
<keyword id="KW-0064">Aspartyl protease</keyword>
<keyword id="KW-0997">Cell inner membrane</keyword>
<keyword id="KW-1003">Cell membrane</keyword>
<keyword id="KW-0378">Hydrolase</keyword>
<keyword id="KW-0472">Membrane</keyword>
<keyword id="KW-0645">Protease</keyword>
<keyword id="KW-0812">Transmembrane</keyword>
<keyword id="KW-1133">Transmembrane helix</keyword>
<comment type="function">
    <text evidence="1">This protein specifically catalyzes the removal of signal peptides from prolipoproteins.</text>
</comment>
<comment type="catalytic activity">
    <reaction evidence="1">
        <text>Release of signal peptides from bacterial membrane prolipoproteins. Hydrolyzes -Xaa-Yaa-Zaa-|-(S,diacylglyceryl)Cys-, in which Xaa is hydrophobic (preferably Leu), and Yaa (Ala or Ser) and Zaa (Gly or Ala) have small, neutral side chains.</text>
        <dbReference type="EC" id="3.4.23.36"/>
    </reaction>
</comment>
<comment type="pathway">
    <text evidence="1">Protein modification; lipoprotein biosynthesis (signal peptide cleavage).</text>
</comment>
<comment type="subcellular location">
    <subcellularLocation>
        <location evidence="1">Cell inner membrane</location>
        <topology evidence="1">Multi-pass membrane protein</topology>
    </subcellularLocation>
</comment>
<comment type="similarity">
    <text evidence="1">Belongs to the peptidase A8 family.</text>
</comment>
<sequence>MSKPLCSTGLRWLWLVVVVLIIDLGSKYLILQNFALGDTVGLFPSLNLHYARNYGAAFSFLADSGGWQRWFFAGIAIGICVILLVMMYRSKATQKLNNIAYALIIGGALGNLFDRLWHGFVVDMIDFYVGDWHFATFNLADSAICIGAALIVLEGFLPKPTAKEQA</sequence>
<evidence type="ECO:0000255" key="1">
    <source>
        <dbReference type="HAMAP-Rule" id="MF_00161"/>
    </source>
</evidence>